<comment type="function">
    <text evidence="1">Plays an olfactory role that is not restricted to pheromone sensitivity.</text>
</comment>
<comment type="subcellular location">
    <subcellularLocation>
        <location evidence="1">Cell membrane</location>
        <topology evidence="1">Multi-pass membrane protein</topology>
    </subcellularLocation>
</comment>
<comment type="similarity">
    <text evidence="4">Belongs to the CD36 family.</text>
</comment>
<reference evidence="5" key="1">
    <citation type="submission" date="2001-12" db="EMBL/GenBank/DDBJ databases">
        <title>Molecular cloning of Helicoverpa armigera sensory neuron membrane protein-1 (SNMP-1) homolog.</title>
        <authorList>
            <person name="Jacquin-Joly E."/>
            <person name="Francois M.-C."/>
        </authorList>
    </citation>
    <scope>NUCLEOTIDE SEQUENCE [MRNA]</scope>
</reference>
<accession>Q8I9S1</accession>
<organism>
    <name type="scientific">Helicoverpa armigera</name>
    <name type="common">Cotton bollworm</name>
    <name type="synonym">Heliothis armigera</name>
    <dbReference type="NCBI Taxonomy" id="29058"/>
    <lineage>
        <taxon>Eukaryota</taxon>
        <taxon>Metazoa</taxon>
        <taxon>Ecdysozoa</taxon>
        <taxon>Arthropoda</taxon>
        <taxon>Hexapoda</taxon>
        <taxon>Insecta</taxon>
        <taxon>Pterygota</taxon>
        <taxon>Neoptera</taxon>
        <taxon>Endopterygota</taxon>
        <taxon>Lepidoptera</taxon>
        <taxon>Glossata</taxon>
        <taxon>Ditrysia</taxon>
        <taxon>Noctuoidea</taxon>
        <taxon>Noctuidae</taxon>
        <taxon>Heliothinae</taxon>
        <taxon>Helicoverpa</taxon>
    </lineage>
</organism>
<feature type="chain" id="PRO_0000408248" description="Sensory neuron membrane protein 1">
    <location>
        <begin position="1"/>
        <end position="523"/>
    </location>
</feature>
<feature type="topological domain" description="Cytoplasmic" evidence="3">
    <location>
        <begin position="1"/>
        <end position="11"/>
    </location>
</feature>
<feature type="transmembrane region" description="Helical" evidence="3">
    <location>
        <begin position="12"/>
        <end position="32"/>
    </location>
</feature>
<feature type="topological domain" description="Extracellular" evidence="3">
    <location>
        <begin position="33"/>
        <end position="458"/>
    </location>
</feature>
<feature type="transmembrane region" description="Helical" evidence="3">
    <location>
        <begin position="459"/>
        <end position="479"/>
    </location>
</feature>
<feature type="topological domain" description="Cytoplasmic" evidence="3">
    <location>
        <begin position="480"/>
        <end position="523"/>
    </location>
</feature>
<feature type="glycosylation site" description="N-linked (GlcNAc...) asparagine" evidence="3">
    <location>
        <position position="67"/>
    </location>
</feature>
<feature type="glycosylation site" description="N-linked (GlcNAc...) asparagine" evidence="3">
    <location>
        <position position="229"/>
    </location>
</feature>
<feature type="glycosylation site" description="N-linked (GlcNAc...) asparagine" evidence="3">
    <location>
        <position position="440"/>
    </location>
</feature>
<feature type="disulfide bond" evidence="2">
    <location>
        <begin position="268"/>
        <end position="333"/>
    </location>
</feature>
<feature type="disulfide bond" evidence="2">
    <location>
        <begin position="297"/>
        <end position="352"/>
    </location>
</feature>
<feature type="disulfide bond" evidence="2">
    <location>
        <begin position="335"/>
        <end position="341"/>
    </location>
</feature>
<proteinExistence type="evidence at transcript level"/>
<protein>
    <recommendedName>
        <fullName>Sensory neuron membrane protein 1</fullName>
    </recommendedName>
</protein>
<evidence type="ECO:0000250" key="1">
    <source>
        <dbReference type="UniProtKB" id="O02351"/>
    </source>
</evidence>
<evidence type="ECO:0000250" key="2">
    <source>
        <dbReference type="UniProtKB" id="P26201"/>
    </source>
</evidence>
<evidence type="ECO:0000255" key="3"/>
<evidence type="ECO:0000305" key="4"/>
<evidence type="ECO:0000312" key="5">
    <source>
        <dbReference type="EMBL" id="AAO15604.1"/>
    </source>
</evidence>
<gene>
    <name evidence="5" type="primary">SNMP-1</name>
</gene>
<name>SNMP1_HELAM</name>
<sequence length="523" mass="59065">MQLPRELKYAAIAGGVALFGLIFGWVLFPTILKSQLKKEMALSKKTDVRKMWEKIPFALDFKVYIFNFTNAEEVQKGATPILKEIGPYHFDEWKEKVEVEDHEEDDTITYKKRDVFYFNPEMSAPGLTGEEIVVIPHIFMLGMALTVARDKPAMLNMVGKAMNGIFDDPPDIFLRVKALDILFRGMIINCARTEFAPKATCTALKKEGVSGLVLEPNNQFRFSIFGTRNNTIDPHVITVKRGITSVMDVGQVVAVDGKTEQTIWRDTCNEFQGTDGTVFPPFVPETERIESFSTDLCRTFKPWYQKKTSYRGIKTNRYIANIGDFANDPELNCYCAKPDTCPPKGLMDLAPCMKAPMYASMPHFLDSDPALLSKVKGLNPDVTQHGIEIDYEPITGTPMVAKQRIQFNIQLLKTDKLDLFKDLSGDIVPLFWIDEGLALNKTFVNMLKHQLFIPKRVVGVLRWWMVSFGSLGAVIGIVFHFRDHIMRLAVSGDTKVSKVTPEEEEQKDISVIGQAQEPAKVNI</sequence>
<keyword id="KW-1003">Cell membrane</keyword>
<keyword id="KW-1015">Disulfide bond</keyword>
<keyword id="KW-0325">Glycoprotein</keyword>
<keyword id="KW-0472">Membrane</keyword>
<keyword id="KW-0552">Olfaction</keyword>
<keyword id="KW-0675">Receptor</keyword>
<keyword id="KW-0716">Sensory transduction</keyword>
<keyword id="KW-0812">Transmembrane</keyword>
<keyword id="KW-1133">Transmembrane helix</keyword>
<dbReference type="EMBL" id="AF462067">
    <property type="protein sequence ID" value="AAO15604.1"/>
    <property type="molecule type" value="mRNA"/>
</dbReference>
<dbReference type="SMR" id="Q8I9S1"/>
<dbReference type="GlyCosmos" id="Q8I9S1">
    <property type="glycosylation" value="3 sites, No reported glycans"/>
</dbReference>
<dbReference type="OrthoDB" id="8300278at2759"/>
<dbReference type="GO" id="GO:0005737">
    <property type="term" value="C:cytoplasm"/>
    <property type="evidence" value="ECO:0007669"/>
    <property type="project" value="TreeGrafter"/>
</dbReference>
<dbReference type="GO" id="GO:0005886">
    <property type="term" value="C:plasma membrane"/>
    <property type="evidence" value="ECO:0007669"/>
    <property type="project" value="UniProtKB-SubCell"/>
</dbReference>
<dbReference type="GO" id="GO:0005044">
    <property type="term" value="F:scavenger receptor activity"/>
    <property type="evidence" value="ECO:0007669"/>
    <property type="project" value="TreeGrafter"/>
</dbReference>
<dbReference type="GO" id="GO:0007608">
    <property type="term" value="P:sensory perception of smell"/>
    <property type="evidence" value="ECO:0007669"/>
    <property type="project" value="UniProtKB-KW"/>
</dbReference>
<dbReference type="InterPro" id="IPR002159">
    <property type="entry name" value="CD36_fam"/>
</dbReference>
<dbReference type="PANTHER" id="PTHR11923">
    <property type="entry name" value="SCAVENGER RECEPTOR CLASS B TYPE-1 SR-B1"/>
    <property type="match status" value="1"/>
</dbReference>
<dbReference type="PANTHER" id="PTHR11923:SF69">
    <property type="entry name" value="SENSORY NEURON MEMBRANE PROTEIN 1"/>
    <property type="match status" value="1"/>
</dbReference>
<dbReference type="Pfam" id="PF01130">
    <property type="entry name" value="CD36"/>
    <property type="match status" value="1"/>
</dbReference>
<dbReference type="PRINTS" id="PR01609">
    <property type="entry name" value="CD36FAMILY"/>
</dbReference>